<evidence type="ECO:0000255" key="1">
    <source>
        <dbReference type="HAMAP-Rule" id="MF_00549"/>
    </source>
</evidence>
<name>MGSA_CELJU</name>
<keyword id="KW-0456">Lyase</keyword>
<keyword id="KW-1185">Reference proteome</keyword>
<feature type="chain" id="PRO_1000128984" description="Methylglyoxal synthase">
    <location>
        <begin position="1"/>
        <end position="154"/>
    </location>
</feature>
<feature type="domain" description="MGS-like" evidence="1">
    <location>
        <begin position="6"/>
        <end position="154"/>
    </location>
</feature>
<feature type="active site" description="Proton donor/acceptor" evidence="1">
    <location>
        <position position="71"/>
    </location>
</feature>
<feature type="binding site" evidence="1">
    <location>
        <position position="19"/>
    </location>
    <ligand>
        <name>substrate</name>
    </ligand>
</feature>
<feature type="binding site" evidence="1">
    <location>
        <position position="23"/>
    </location>
    <ligand>
        <name>substrate</name>
    </ligand>
</feature>
<feature type="binding site" evidence="1">
    <location>
        <begin position="45"/>
        <end position="48"/>
    </location>
    <ligand>
        <name>substrate</name>
    </ligand>
</feature>
<feature type="binding site" evidence="1">
    <location>
        <begin position="65"/>
        <end position="66"/>
    </location>
    <ligand>
        <name>substrate</name>
    </ligand>
</feature>
<feature type="binding site" evidence="1">
    <location>
        <position position="98"/>
    </location>
    <ligand>
        <name>substrate</name>
    </ligand>
</feature>
<comment type="function">
    <text evidence="1">Catalyzes the formation of methylglyoxal from dihydroxyacetone phosphate.</text>
</comment>
<comment type="catalytic activity">
    <reaction evidence="1">
        <text>dihydroxyacetone phosphate = methylglyoxal + phosphate</text>
        <dbReference type="Rhea" id="RHEA:17937"/>
        <dbReference type="ChEBI" id="CHEBI:17158"/>
        <dbReference type="ChEBI" id="CHEBI:43474"/>
        <dbReference type="ChEBI" id="CHEBI:57642"/>
        <dbReference type="EC" id="4.2.3.3"/>
    </reaction>
</comment>
<comment type="similarity">
    <text evidence="1">Belongs to the methylglyoxal synthase family.</text>
</comment>
<reference key="1">
    <citation type="journal article" date="2008" name="J. Bacteriol.">
        <title>Insights into plant cell wall degradation from the genome sequence of the soil bacterium Cellvibrio japonicus.</title>
        <authorList>
            <person name="DeBoy R.T."/>
            <person name="Mongodin E.F."/>
            <person name="Fouts D.E."/>
            <person name="Tailford L.E."/>
            <person name="Khouri H."/>
            <person name="Emerson J.B."/>
            <person name="Mohamoud Y."/>
            <person name="Watkins K."/>
            <person name="Henrissat B."/>
            <person name="Gilbert H.J."/>
            <person name="Nelson K.E."/>
        </authorList>
    </citation>
    <scope>NUCLEOTIDE SEQUENCE [LARGE SCALE GENOMIC DNA]</scope>
    <source>
        <strain>Ueda107</strain>
    </source>
</reference>
<protein>
    <recommendedName>
        <fullName evidence="1">Methylglyoxal synthase</fullName>
        <shortName evidence="1">MGS</shortName>
        <ecNumber evidence="1">4.2.3.3</ecNumber>
    </recommendedName>
</protein>
<sequence length="154" mass="16986">MEYKQSPLPANKAIALVAHDNKKQDLLAWCRKHLDALRHHQLMATGTTGALIERETGLAIHKLISGPLGGDQQVGALITEGKVDMLVFFWDPFEPMPHDPDVKALLRIAAVWNIPVACNQVSADFMVASPCFSTPVERLIPDYAAYMARRAQGN</sequence>
<dbReference type="EC" id="4.2.3.3" evidence="1"/>
<dbReference type="EMBL" id="CP000934">
    <property type="protein sequence ID" value="ACE85796.1"/>
    <property type="molecule type" value="Genomic_DNA"/>
</dbReference>
<dbReference type="RefSeq" id="WP_012487381.1">
    <property type="nucleotide sequence ID" value="NC_010995.1"/>
</dbReference>
<dbReference type="SMR" id="B3PFP8"/>
<dbReference type="STRING" id="498211.CJA_1761"/>
<dbReference type="KEGG" id="cja:CJA_1761"/>
<dbReference type="eggNOG" id="COG1803">
    <property type="taxonomic scope" value="Bacteria"/>
</dbReference>
<dbReference type="HOGENOM" id="CLU_120420_0_1_6"/>
<dbReference type="OrthoDB" id="9787147at2"/>
<dbReference type="Proteomes" id="UP000001036">
    <property type="component" value="Chromosome"/>
</dbReference>
<dbReference type="GO" id="GO:0005829">
    <property type="term" value="C:cytosol"/>
    <property type="evidence" value="ECO:0007669"/>
    <property type="project" value="TreeGrafter"/>
</dbReference>
<dbReference type="GO" id="GO:0008929">
    <property type="term" value="F:methylglyoxal synthase activity"/>
    <property type="evidence" value="ECO:0007669"/>
    <property type="project" value="UniProtKB-UniRule"/>
</dbReference>
<dbReference type="GO" id="GO:0019242">
    <property type="term" value="P:methylglyoxal biosynthetic process"/>
    <property type="evidence" value="ECO:0007669"/>
    <property type="project" value="UniProtKB-UniRule"/>
</dbReference>
<dbReference type="CDD" id="cd01422">
    <property type="entry name" value="MGS"/>
    <property type="match status" value="1"/>
</dbReference>
<dbReference type="Gene3D" id="3.40.50.1380">
    <property type="entry name" value="Methylglyoxal synthase-like domain"/>
    <property type="match status" value="1"/>
</dbReference>
<dbReference type="HAMAP" id="MF_00549">
    <property type="entry name" value="Methylglyoxal_synth"/>
    <property type="match status" value="1"/>
</dbReference>
<dbReference type="InterPro" id="IPR004363">
    <property type="entry name" value="Methylgl_synth"/>
</dbReference>
<dbReference type="InterPro" id="IPR018148">
    <property type="entry name" value="Methylglyoxal_synth_AS"/>
</dbReference>
<dbReference type="InterPro" id="IPR011607">
    <property type="entry name" value="MGS-like_dom"/>
</dbReference>
<dbReference type="InterPro" id="IPR036914">
    <property type="entry name" value="MGS-like_dom_sf"/>
</dbReference>
<dbReference type="NCBIfam" id="TIGR00160">
    <property type="entry name" value="MGSA"/>
    <property type="match status" value="1"/>
</dbReference>
<dbReference type="NCBIfam" id="NF003559">
    <property type="entry name" value="PRK05234.1"/>
    <property type="match status" value="1"/>
</dbReference>
<dbReference type="PANTHER" id="PTHR30492">
    <property type="entry name" value="METHYLGLYOXAL SYNTHASE"/>
    <property type="match status" value="1"/>
</dbReference>
<dbReference type="PANTHER" id="PTHR30492:SF0">
    <property type="entry name" value="METHYLGLYOXAL SYNTHASE"/>
    <property type="match status" value="1"/>
</dbReference>
<dbReference type="Pfam" id="PF02142">
    <property type="entry name" value="MGS"/>
    <property type="match status" value="1"/>
</dbReference>
<dbReference type="PIRSF" id="PIRSF006614">
    <property type="entry name" value="Methylglyox_syn"/>
    <property type="match status" value="1"/>
</dbReference>
<dbReference type="SMART" id="SM00851">
    <property type="entry name" value="MGS"/>
    <property type="match status" value="1"/>
</dbReference>
<dbReference type="SUPFAM" id="SSF52335">
    <property type="entry name" value="Methylglyoxal synthase-like"/>
    <property type="match status" value="1"/>
</dbReference>
<dbReference type="PROSITE" id="PS01335">
    <property type="entry name" value="METHYLGLYOXAL_SYNTH"/>
    <property type="match status" value="1"/>
</dbReference>
<dbReference type="PROSITE" id="PS51855">
    <property type="entry name" value="MGS"/>
    <property type="match status" value="1"/>
</dbReference>
<gene>
    <name evidence="1" type="primary">mgsA</name>
    <name type="ordered locus">CJA_1761</name>
</gene>
<proteinExistence type="inferred from homology"/>
<accession>B3PFP8</accession>
<organism>
    <name type="scientific">Cellvibrio japonicus (strain Ueda107)</name>
    <name type="common">Pseudomonas fluorescens subsp. cellulosa</name>
    <dbReference type="NCBI Taxonomy" id="498211"/>
    <lineage>
        <taxon>Bacteria</taxon>
        <taxon>Pseudomonadati</taxon>
        <taxon>Pseudomonadota</taxon>
        <taxon>Gammaproteobacteria</taxon>
        <taxon>Cellvibrionales</taxon>
        <taxon>Cellvibrionaceae</taxon>
        <taxon>Cellvibrio</taxon>
    </lineage>
</organism>